<feature type="chain" id="PRO_0000365541" description="Costars family protein ABRACL">
    <location>
        <begin position="1"/>
        <end position="81"/>
    </location>
</feature>
<evidence type="ECO:0000305" key="1"/>
<sequence length="81" mass="8980">MNVDHEVNLLVEEIRRLGSKGNDGKLSVKFGVLFSDDKCANLFEALVGTLKAAKKRKIVTYQGELLLQGVHDNVDIVLLQD</sequence>
<protein>
    <recommendedName>
        <fullName>Costars family protein ABRACL</fullName>
    </recommendedName>
    <alternativeName>
        <fullName>ABRA C-terminal-like protein</fullName>
    </alternativeName>
</protein>
<proteinExistence type="inferred from homology"/>
<name>ABRAL_XENTR</name>
<gene>
    <name type="primary">abracl</name>
</gene>
<reference key="1">
    <citation type="submission" date="2007-03" db="EMBL/GenBank/DDBJ databases">
        <authorList>
            <consortium name="NIH - Xenopus Gene Collection (XGC) project"/>
        </authorList>
    </citation>
    <scope>NUCLEOTIDE SEQUENCE [LARGE SCALE MRNA]</scope>
    <source>
        <tissue>Tadpole</tissue>
    </source>
</reference>
<organism>
    <name type="scientific">Xenopus tropicalis</name>
    <name type="common">Western clawed frog</name>
    <name type="synonym">Silurana tropicalis</name>
    <dbReference type="NCBI Taxonomy" id="8364"/>
    <lineage>
        <taxon>Eukaryota</taxon>
        <taxon>Metazoa</taxon>
        <taxon>Chordata</taxon>
        <taxon>Craniata</taxon>
        <taxon>Vertebrata</taxon>
        <taxon>Euteleostomi</taxon>
        <taxon>Amphibia</taxon>
        <taxon>Batrachia</taxon>
        <taxon>Anura</taxon>
        <taxon>Pipoidea</taxon>
        <taxon>Pipidae</taxon>
        <taxon>Xenopodinae</taxon>
        <taxon>Xenopus</taxon>
        <taxon>Silurana</taxon>
    </lineage>
</organism>
<keyword id="KW-1185">Reference proteome</keyword>
<dbReference type="EMBL" id="BC135554">
    <property type="protein sequence ID" value="AAI35555.1"/>
    <property type="molecule type" value="mRNA"/>
</dbReference>
<dbReference type="RefSeq" id="NP_001165089.1">
    <property type="nucleotide sequence ID" value="NM_001171618.1"/>
</dbReference>
<dbReference type="SMR" id="A4IHJ3"/>
<dbReference type="FunCoup" id="A4IHJ3">
    <property type="interactions" value="126"/>
</dbReference>
<dbReference type="DNASU" id="100124856"/>
<dbReference type="GeneID" id="100124856"/>
<dbReference type="KEGG" id="xtr:100124856"/>
<dbReference type="AGR" id="Xenbase:XB-GENE-6457690"/>
<dbReference type="CTD" id="58527"/>
<dbReference type="Xenbase" id="XB-GENE-6457690">
    <property type="gene designation" value="abracl"/>
</dbReference>
<dbReference type="InParanoid" id="A4IHJ3"/>
<dbReference type="OrthoDB" id="9871914at2759"/>
<dbReference type="Proteomes" id="UP000008143">
    <property type="component" value="Chromosome 5"/>
</dbReference>
<dbReference type="Bgee" id="ENSXETG00000011668">
    <property type="expression patterns" value="Expressed in early embryo and 13 other cell types or tissues"/>
</dbReference>
<dbReference type="FunFam" id="1.10.10.1540:FF:000002">
    <property type="entry name" value="costars family protein ABRACL"/>
    <property type="match status" value="1"/>
</dbReference>
<dbReference type="Gene3D" id="1.10.10.1540">
    <property type="entry name" value="Costar domain"/>
    <property type="match status" value="1"/>
</dbReference>
<dbReference type="InterPro" id="IPR044302">
    <property type="entry name" value="Costars"/>
</dbReference>
<dbReference type="InterPro" id="IPR027817">
    <property type="entry name" value="Costars_dom"/>
</dbReference>
<dbReference type="InterPro" id="IPR038095">
    <property type="entry name" value="Costars_sf"/>
</dbReference>
<dbReference type="PANTHER" id="PTHR46334">
    <property type="entry name" value="COSTARS FAMILY PROTEIN ABRACL"/>
    <property type="match status" value="1"/>
</dbReference>
<dbReference type="PANTHER" id="PTHR46334:SF1">
    <property type="entry name" value="COSTARS FAMILY PROTEIN ABRACL"/>
    <property type="match status" value="1"/>
</dbReference>
<dbReference type="Pfam" id="PF14705">
    <property type="entry name" value="Costars"/>
    <property type="match status" value="1"/>
</dbReference>
<dbReference type="SMART" id="SM01283">
    <property type="entry name" value="Costars"/>
    <property type="match status" value="1"/>
</dbReference>
<accession>A4IHJ3</accession>
<comment type="similarity">
    <text evidence="1">Belongs to the costars family.</text>
</comment>